<organism>
    <name type="scientific">Halocynthia roretzi</name>
    <name type="common">Sea squirt</name>
    <name type="synonym">Cynthia roretzi</name>
    <dbReference type="NCBI Taxonomy" id="7729"/>
    <lineage>
        <taxon>Eukaryota</taxon>
        <taxon>Metazoa</taxon>
        <taxon>Chordata</taxon>
        <taxon>Tunicata</taxon>
        <taxon>Ascidiacea</taxon>
        <taxon>Stolidobranchia</taxon>
        <taxon>Pyuridae</taxon>
        <taxon>Halocynthia</taxon>
    </lineage>
</organism>
<comment type="function">
    <text>Calmodulin mediates the control of a large number of enzymes, ion channels and other proteins by Ca(2+). Among the enzymes to be stimulated by the calmodulin-Ca(2+) complex are a number of protein kinases and phosphatases.</text>
</comment>
<comment type="miscellaneous">
    <text>This protein has four functional calcium-binding sites.</text>
</comment>
<comment type="similarity">
    <text evidence="3">Belongs to the calmodulin family.</text>
</comment>
<reference key="1">
    <citation type="journal article" date="1999" name="Gene">
        <title>The structural organization of the ascidian, Halocynthia roretzi, calmodulin genes. The vicissitude of introns during the evolution of calmodulin genes.</title>
        <authorList>
            <person name="Yuasa H.J."/>
            <person name="Yamamoto H."/>
            <person name="Takagi T."/>
        </authorList>
    </citation>
    <scope>NUCLEOTIDE SEQUENCE [GENOMIC DNA]</scope>
</reference>
<evidence type="ECO:0000250" key="1"/>
<evidence type="ECO:0000255" key="2">
    <source>
        <dbReference type="PROSITE-ProRule" id="PRU00448"/>
    </source>
</evidence>
<evidence type="ECO:0000305" key="3"/>
<name>CALMB_HALRO</name>
<accession>O96081</accession>
<feature type="initiator methionine" description="Removed" evidence="1">
    <location>
        <position position="1"/>
    </location>
</feature>
<feature type="chain" id="PRO_0000198255" description="Calmodulin-B">
    <location>
        <begin position="2"/>
        <end position="149"/>
    </location>
</feature>
<feature type="domain" description="EF-hand 1" evidence="2">
    <location>
        <begin position="8"/>
        <end position="43"/>
    </location>
</feature>
<feature type="domain" description="EF-hand 2" evidence="2">
    <location>
        <begin position="44"/>
        <end position="79"/>
    </location>
</feature>
<feature type="domain" description="EF-hand 3" evidence="2">
    <location>
        <begin position="81"/>
        <end position="116"/>
    </location>
</feature>
<feature type="domain" description="EF-hand 4" evidence="2">
    <location>
        <begin position="117"/>
        <end position="149"/>
    </location>
</feature>
<feature type="binding site" evidence="2">
    <location>
        <position position="21"/>
    </location>
    <ligand>
        <name>Ca(2+)</name>
        <dbReference type="ChEBI" id="CHEBI:29108"/>
        <label>1</label>
    </ligand>
</feature>
<feature type="binding site" evidence="2">
    <location>
        <position position="23"/>
    </location>
    <ligand>
        <name>Ca(2+)</name>
        <dbReference type="ChEBI" id="CHEBI:29108"/>
        <label>1</label>
    </ligand>
</feature>
<feature type="binding site" evidence="2">
    <location>
        <position position="25"/>
    </location>
    <ligand>
        <name>Ca(2+)</name>
        <dbReference type="ChEBI" id="CHEBI:29108"/>
        <label>1</label>
    </ligand>
</feature>
<feature type="binding site" evidence="2">
    <location>
        <position position="27"/>
    </location>
    <ligand>
        <name>Ca(2+)</name>
        <dbReference type="ChEBI" id="CHEBI:29108"/>
        <label>1</label>
    </ligand>
</feature>
<feature type="binding site" evidence="2">
    <location>
        <position position="32"/>
    </location>
    <ligand>
        <name>Ca(2+)</name>
        <dbReference type="ChEBI" id="CHEBI:29108"/>
        <label>1</label>
    </ligand>
</feature>
<feature type="binding site" evidence="2">
    <location>
        <position position="57"/>
    </location>
    <ligand>
        <name>Ca(2+)</name>
        <dbReference type="ChEBI" id="CHEBI:29108"/>
        <label>2</label>
    </ligand>
</feature>
<feature type="binding site" evidence="2">
    <location>
        <position position="59"/>
    </location>
    <ligand>
        <name>Ca(2+)</name>
        <dbReference type="ChEBI" id="CHEBI:29108"/>
        <label>2</label>
    </ligand>
</feature>
<feature type="binding site" evidence="2">
    <location>
        <position position="61"/>
    </location>
    <ligand>
        <name>Ca(2+)</name>
        <dbReference type="ChEBI" id="CHEBI:29108"/>
        <label>2</label>
    </ligand>
</feature>
<feature type="binding site" evidence="2">
    <location>
        <position position="63"/>
    </location>
    <ligand>
        <name>Ca(2+)</name>
        <dbReference type="ChEBI" id="CHEBI:29108"/>
        <label>2</label>
    </ligand>
</feature>
<feature type="binding site" evidence="2">
    <location>
        <position position="68"/>
    </location>
    <ligand>
        <name>Ca(2+)</name>
        <dbReference type="ChEBI" id="CHEBI:29108"/>
        <label>2</label>
    </ligand>
</feature>
<feature type="binding site" evidence="2">
    <location>
        <position position="94"/>
    </location>
    <ligand>
        <name>Ca(2+)</name>
        <dbReference type="ChEBI" id="CHEBI:29108"/>
        <label>3</label>
    </ligand>
</feature>
<feature type="binding site" evidence="2">
    <location>
        <position position="96"/>
    </location>
    <ligand>
        <name>Ca(2+)</name>
        <dbReference type="ChEBI" id="CHEBI:29108"/>
        <label>3</label>
    </ligand>
</feature>
<feature type="binding site" evidence="2">
    <location>
        <position position="98"/>
    </location>
    <ligand>
        <name>Ca(2+)</name>
        <dbReference type="ChEBI" id="CHEBI:29108"/>
        <label>3</label>
    </ligand>
</feature>
<feature type="binding site" evidence="2">
    <location>
        <position position="105"/>
    </location>
    <ligand>
        <name>Ca(2+)</name>
        <dbReference type="ChEBI" id="CHEBI:29108"/>
        <label>3</label>
    </ligand>
</feature>
<feature type="binding site" evidence="2">
    <location>
        <position position="130"/>
    </location>
    <ligand>
        <name>Ca(2+)</name>
        <dbReference type="ChEBI" id="CHEBI:29108"/>
        <label>4</label>
    </ligand>
</feature>
<feature type="binding site" evidence="2">
    <location>
        <position position="132"/>
    </location>
    <ligand>
        <name>Ca(2+)</name>
        <dbReference type="ChEBI" id="CHEBI:29108"/>
        <label>4</label>
    </ligand>
</feature>
<feature type="binding site" evidence="2">
    <location>
        <position position="134"/>
    </location>
    <ligand>
        <name>Ca(2+)</name>
        <dbReference type="ChEBI" id="CHEBI:29108"/>
        <label>4</label>
    </ligand>
</feature>
<feature type="binding site" evidence="2">
    <location>
        <position position="136"/>
    </location>
    <ligand>
        <name>Ca(2+)</name>
        <dbReference type="ChEBI" id="CHEBI:29108"/>
        <label>4</label>
    </ligand>
</feature>
<feature type="binding site" evidence="2">
    <location>
        <position position="141"/>
    </location>
    <ligand>
        <name>Ca(2+)</name>
        <dbReference type="ChEBI" id="CHEBI:29108"/>
        <label>4</label>
    </ligand>
</feature>
<feature type="modified residue" description="N-acetylalanine" evidence="1">
    <location>
        <position position="2"/>
    </location>
</feature>
<feature type="modified residue" description="N6,N6,N6-trimethyllysine" evidence="1">
    <location>
        <position position="116"/>
    </location>
</feature>
<proteinExistence type="inferred from homology"/>
<keyword id="KW-0007">Acetylation</keyword>
<keyword id="KW-0106">Calcium</keyword>
<keyword id="KW-0479">Metal-binding</keyword>
<keyword id="KW-0488">Methylation</keyword>
<keyword id="KW-0677">Repeat</keyword>
<sequence>MADQLTEEQIAEFKEAFSLFDKDGDGTITTKELGTVMRSLGQNPTEAELQDMINEVDADGNGTIDFPEFLTMMARKMKETDSEEEIREAFRVFDKDGNGFISAAELRHVMTNLGEKLTDEEVDEMIREADIDGDGQVNYEEFVTMMTCK</sequence>
<protein>
    <recommendedName>
        <fullName>Calmodulin-B</fullName>
        <shortName>CaM B</shortName>
    </recommendedName>
</protein>
<dbReference type="EMBL" id="AB018797">
    <property type="protein sequence ID" value="BAA33968.1"/>
    <property type="molecule type" value="Genomic_DNA"/>
</dbReference>
<dbReference type="BMRB" id="O96081"/>
<dbReference type="SMR" id="O96081"/>
<dbReference type="GO" id="GO:0016460">
    <property type="term" value="C:myosin II complex"/>
    <property type="evidence" value="ECO:0007669"/>
    <property type="project" value="TreeGrafter"/>
</dbReference>
<dbReference type="GO" id="GO:0005509">
    <property type="term" value="F:calcium ion binding"/>
    <property type="evidence" value="ECO:0007669"/>
    <property type="project" value="InterPro"/>
</dbReference>
<dbReference type="CDD" id="cd00051">
    <property type="entry name" value="EFh"/>
    <property type="match status" value="2"/>
</dbReference>
<dbReference type="FunFam" id="1.10.238.10:FF:000527">
    <property type="entry name" value="Calmodulin-3"/>
    <property type="match status" value="1"/>
</dbReference>
<dbReference type="Gene3D" id="1.10.238.10">
    <property type="entry name" value="EF-hand"/>
    <property type="match status" value="3"/>
</dbReference>
<dbReference type="InterPro" id="IPR050230">
    <property type="entry name" value="CALM/Myosin/TropC-like"/>
</dbReference>
<dbReference type="InterPro" id="IPR011992">
    <property type="entry name" value="EF-hand-dom_pair"/>
</dbReference>
<dbReference type="InterPro" id="IPR018247">
    <property type="entry name" value="EF_Hand_1_Ca_BS"/>
</dbReference>
<dbReference type="InterPro" id="IPR002048">
    <property type="entry name" value="EF_hand_dom"/>
</dbReference>
<dbReference type="PANTHER" id="PTHR23048:SF0">
    <property type="entry name" value="CALMODULIN LIKE 3"/>
    <property type="match status" value="1"/>
</dbReference>
<dbReference type="PANTHER" id="PTHR23048">
    <property type="entry name" value="MYOSIN LIGHT CHAIN 1, 3"/>
    <property type="match status" value="1"/>
</dbReference>
<dbReference type="Pfam" id="PF13499">
    <property type="entry name" value="EF-hand_7"/>
    <property type="match status" value="2"/>
</dbReference>
<dbReference type="SMART" id="SM00054">
    <property type="entry name" value="EFh"/>
    <property type="match status" value="4"/>
</dbReference>
<dbReference type="SUPFAM" id="SSF47473">
    <property type="entry name" value="EF-hand"/>
    <property type="match status" value="1"/>
</dbReference>
<dbReference type="PROSITE" id="PS00018">
    <property type="entry name" value="EF_HAND_1"/>
    <property type="match status" value="4"/>
</dbReference>
<dbReference type="PROSITE" id="PS50222">
    <property type="entry name" value="EF_HAND_2"/>
    <property type="match status" value="4"/>
</dbReference>